<evidence type="ECO:0000255" key="1">
    <source>
        <dbReference type="HAMAP-Rule" id="MF_00281"/>
    </source>
</evidence>
<gene>
    <name evidence="1" type="primary">pheS</name>
    <name type="ordered locus">SeHA_C1465</name>
</gene>
<dbReference type="EC" id="6.1.1.20" evidence="1"/>
<dbReference type="EMBL" id="CP001120">
    <property type="protein sequence ID" value="ACF70184.1"/>
    <property type="molecule type" value="Genomic_DNA"/>
</dbReference>
<dbReference type="RefSeq" id="WP_000018570.1">
    <property type="nucleotide sequence ID" value="NC_011083.1"/>
</dbReference>
<dbReference type="SMR" id="B4TGH5"/>
<dbReference type="KEGG" id="seh:SeHA_C1465"/>
<dbReference type="HOGENOM" id="CLU_025086_0_1_6"/>
<dbReference type="Proteomes" id="UP000001866">
    <property type="component" value="Chromosome"/>
</dbReference>
<dbReference type="GO" id="GO:0005737">
    <property type="term" value="C:cytoplasm"/>
    <property type="evidence" value="ECO:0007669"/>
    <property type="project" value="UniProtKB-SubCell"/>
</dbReference>
<dbReference type="GO" id="GO:0005524">
    <property type="term" value="F:ATP binding"/>
    <property type="evidence" value="ECO:0007669"/>
    <property type="project" value="UniProtKB-UniRule"/>
</dbReference>
<dbReference type="GO" id="GO:0000287">
    <property type="term" value="F:magnesium ion binding"/>
    <property type="evidence" value="ECO:0007669"/>
    <property type="project" value="UniProtKB-UniRule"/>
</dbReference>
<dbReference type="GO" id="GO:0004826">
    <property type="term" value="F:phenylalanine-tRNA ligase activity"/>
    <property type="evidence" value="ECO:0007669"/>
    <property type="project" value="UniProtKB-UniRule"/>
</dbReference>
<dbReference type="GO" id="GO:0000049">
    <property type="term" value="F:tRNA binding"/>
    <property type="evidence" value="ECO:0007669"/>
    <property type="project" value="InterPro"/>
</dbReference>
<dbReference type="GO" id="GO:0006432">
    <property type="term" value="P:phenylalanyl-tRNA aminoacylation"/>
    <property type="evidence" value="ECO:0007669"/>
    <property type="project" value="UniProtKB-UniRule"/>
</dbReference>
<dbReference type="CDD" id="cd00496">
    <property type="entry name" value="PheRS_alpha_core"/>
    <property type="match status" value="1"/>
</dbReference>
<dbReference type="FunFam" id="3.30.930.10:FF:000003">
    <property type="entry name" value="Phenylalanine--tRNA ligase alpha subunit"/>
    <property type="match status" value="1"/>
</dbReference>
<dbReference type="Gene3D" id="3.30.930.10">
    <property type="entry name" value="Bira Bifunctional Protein, Domain 2"/>
    <property type="match status" value="1"/>
</dbReference>
<dbReference type="HAMAP" id="MF_00281">
    <property type="entry name" value="Phe_tRNA_synth_alpha1"/>
    <property type="match status" value="1"/>
</dbReference>
<dbReference type="InterPro" id="IPR006195">
    <property type="entry name" value="aa-tRNA-synth_II"/>
</dbReference>
<dbReference type="InterPro" id="IPR045864">
    <property type="entry name" value="aa-tRNA-synth_II/BPL/LPL"/>
</dbReference>
<dbReference type="InterPro" id="IPR004529">
    <property type="entry name" value="Phe-tRNA-synth_IIc_asu"/>
</dbReference>
<dbReference type="InterPro" id="IPR004188">
    <property type="entry name" value="Phe-tRNA_ligase_II_N"/>
</dbReference>
<dbReference type="InterPro" id="IPR022911">
    <property type="entry name" value="Phe_tRNA_ligase_alpha1_bac"/>
</dbReference>
<dbReference type="InterPro" id="IPR002319">
    <property type="entry name" value="Phenylalanyl-tRNA_Synthase"/>
</dbReference>
<dbReference type="InterPro" id="IPR010978">
    <property type="entry name" value="tRNA-bd_arm"/>
</dbReference>
<dbReference type="NCBIfam" id="TIGR00468">
    <property type="entry name" value="pheS"/>
    <property type="match status" value="1"/>
</dbReference>
<dbReference type="PANTHER" id="PTHR11538:SF41">
    <property type="entry name" value="PHENYLALANINE--TRNA LIGASE, MITOCHONDRIAL"/>
    <property type="match status" value="1"/>
</dbReference>
<dbReference type="PANTHER" id="PTHR11538">
    <property type="entry name" value="PHENYLALANYL-TRNA SYNTHETASE"/>
    <property type="match status" value="1"/>
</dbReference>
<dbReference type="Pfam" id="PF02912">
    <property type="entry name" value="Phe_tRNA-synt_N"/>
    <property type="match status" value="1"/>
</dbReference>
<dbReference type="Pfam" id="PF01409">
    <property type="entry name" value="tRNA-synt_2d"/>
    <property type="match status" value="1"/>
</dbReference>
<dbReference type="SUPFAM" id="SSF55681">
    <property type="entry name" value="Class II aaRS and biotin synthetases"/>
    <property type="match status" value="1"/>
</dbReference>
<dbReference type="SUPFAM" id="SSF46589">
    <property type="entry name" value="tRNA-binding arm"/>
    <property type="match status" value="1"/>
</dbReference>
<dbReference type="PROSITE" id="PS50862">
    <property type="entry name" value="AA_TRNA_LIGASE_II"/>
    <property type="match status" value="1"/>
</dbReference>
<feature type="chain" id="PRO_1000114912" description="Phenylalanine--tRNA ligase alpha subunit">
    <location>
        <begin position="1"/>
        <end position="327"/>
    </location>
</feature>
<feature type="binding site" evidence="1">
    <location>
        <position position="252"/>
    </location>
    <ligand>
        <name>Mg(2+)</name>
        <dbReference type="ChEBI" id="CHEBI:18420"/>
        <note>shared with beta subunit</note>
    </ligand>
</feature>
<accession>B4TGH5</accession>
<keyword id="KW-0030">Aminoacyl-tRNA synthetase</keyword>
<keyword id="KW-0067">ATP-binding</keyword>
<keyword id="KW-0963">Cytoplasm</keyword>
<keyword id="KW-0436">Ligase</keyword>
<keyword id="KW-0460">Magnesium</keyword>
<keyword id="KW-0479">Metal-binding</keyword>
<keyword id="KW-0547">Nucleotide-binding</keyword>
<keyword id="KW-0648">Protein biosynthesis</keyword>
<name>SYFA_SALHS</name>
<organism>
    <name type="scientific">Salmonella heidelberg (strain SL476)</name>
    <dbReference type="NCBI Taxonomy" id="454169"/>
    <lineage>
        <taxon>Bacteria</taxon>
        <taxon>Pseudomonadati</taxon>
        <taxon>Pseudomonadota</taxon>
        <taxon>Gammaproteobacteria</taxon>
        <taxon>Enterobacterales</taxon>
        <taxon>Enterobacteriaceae</taxon>
        <taxon>Salmonella</taxon>
    </lineage>
</organism>
<reference key="1">
    <citation type="journal article" date="2011" name="J. Bacteriol.">
        <title>Comparative genomics of 28 Salmonella enterica isolates: evidence for CRISPR-mediated adaptive sublineage evolution.</title>
        <authorList>
            <person name="Fricke W.F."/>
            <person name="Mammel M.K."/>
            <person name="McDermott P.F."/>
            <person name="Tartera C."/>
            <person name="White D.G."/>
            <person name="Leclerc J.E."/>
            <person name="Ravel J."/>
            <person name="Cebula T.A."/>
        </authorList>
    </citation>
    <scope>NUCLEOTIDE SEQUENCE [LARGE SCALE GENOMIC DNA]</scope>
    <source>
        <strain>SL476</strain>
    </source>
</reference>
<protein>
    <recommendedName>
        <fullName evidence="1">Phenylalanine--tRNA ligase alpha subunit</fullName>
        <ecNumber evidence="1">6.1.1.20</ecNumber>
    </recommendedName>
    <alternativeName>
        <fullName evidence="1">Phenylalanyl-tRNA synthetase alpha subunit</fullName>
        <shortName evidence="1">PheRS</shortName>
    </alternativeName>
</protein>
<sequence length="327" mass="36755">MSHLAELVANAAAAINQASDVAALDNVRVEYLGKKGHLTLQMTTLRDLPPEERPAAGAVINAAKEQVQQALNARKAELESAALNARLAAETIDISLPGRRIENGGLHPVTRTIDRIESFFGELGFTVATGPEIEDDYHNFDALNIPGHHPARADHDTFWFDATRLLRTQTSGVQIRTMKAQQPPIRIIAPGRVYRNDYDQTHTPMFHQMEGLIVDTNISFTNLKGTLHDFLRNFFEEDLQIRFRPSYFPFTEPSAEVDVMGKNGKWLEVLGCGMVHPNVLRNVGIDPEIYSGFAFGMGMERLTMLRYGVTDLRSFFENDLRFLKQFK</sequence>
<proteinExistence type="inferred from homology"/>
<comment type="catalytic activity">
    <reaction evidence="1">
        <text>tRNA(Phe) + L-phenylalanine + ATP = L-phenylalanyl-tRNA(Phe) + AMP + diphosphate + H(+)</text>
        <dbReference type="Rhea" id="RHEA:19413"/>
        <dbReference type="Rhea" id="RHEA-COMP:9668"/>
        <dbReference type="Rhea" id="RHEA-COMP:9699"/>
        <dbReference type="ChEBI" id="CHEBI:15378"/>
        <dbReference type="ChEBI" id="CHEBI:30616"/>
        <dbReference type="ChEBI" id="CHEBI:33019"/>
        <dbReference type="ChEBI" id="CHEBI:58095"/>
        <dbReference type="ChEBI" id="CHEBI:78442"/>
        <dbReference type="ChEBI" id="CHEBI:78531"/>
        <dbReference type="ChEBI" id="CHEBI:456215"/>
        <dbReference type="EC" id="6.1.1.20"/>
    </reaction>
</comment>
<comment type="cofactor">
    <cofactor evidence="1">
        <name>Mg(2+)</name>
        <dbReference type="ChEBI" id="CHEBI:18420"/>
    </cofactor>
    <text evidence="1">Binds 2 magnesium ions per tetramer.</text>
</comment>
<comment type="subunit">
    <text evidence="1">Tetramer of two alpha and two beta subunits.</text>
</comment>
<comment type="subcellular location">
    <subcellularLocation>
        <location evidence="1">Cytoplasm</location>
    </subcellularLocation>
</comment>
<comment type="similarity">
    <text evidence="1">Belongs to the class-II aminoacyl-tRNA synthetase family. Phe-tRNA synthetase alpha subunit type 1 subfamily.</text>
</comment>